<sequence length="152" mass="16919">MELTTRTLPARKHIALVAHDHCKQMLMSWVERHQPLLEQHVLYATGTTGNLISRATGMNVNAMLSGPMGGDQQVGALISEGKIDVLIFFWDPLNAVPHDPDVKALLRLATVWNIPVATNVATADFIIQSPHFNDAVDILIPDYQRYLADRLK</sequence>
<comment type="function">
    <text evidence="1 4 5 6">Catalyzes the formation of methylglyoxal from dihydroxyacetone phosphate.</text>
</comment>
<comment type="catalytic activity">
    <reaction evidence="1 4 5 6">
        <text>dihydroxyacetone phosphate = methylglyoxal + phosphate</text>
        <dbReference type="Rhea" id="RHEA:17937"/>
        <dbReference type="ChEBI" id="CHEBI:17158"/>
        <dbReference type="ChEBI" id="CHEBI:43474"/>
        <dbReference type="ChEBI" id="CHEBI:57642"/>
        <dbReference type="EC" id="4.2.3.3"/>
    </reaction>
</comment>
<comment type="activity regulation">
    <text evidence="4 5 6">Inhibited by inorganic phosphate ions (PubMed:15049687, PubMed:9665712). Competitively inhibited by phosphoglycolate (PubMed:15049687). Competitively inhibited by phosphoglycolohydroxamate (PubMed:11389594).</text>
</comment>
<comment type="biophysicochemical properties">
    <kinetics>
        <KM evidence="6">0.2 mM for dihydroxyacetone phosphate</KM>
        <text evidence="6">kcat is 220 sec(-1) with dihydroxyacetone phosphate as substrate.</text>
    </kinetics>
    <phDependence>
        <text evidence="5">Optimum pH is 7.5.</text>
    </phDependence>
</comment>
<comment type="subunit">
    <text evidence="2 3 4 5">Homohexamer.</text>
</comment>
<comment type="subcellular location">
    <subcellularLocation>
        <location>Cytoplasm</location>
    </subcellularLocation>
</comment>
<comment type="similarity">
    <text evidence="1 7">Belongs to the methylglyoxal synthase family.</text>
</comment>
<accession>P0A731</accession>
<accession>P37066</accession>
<accession>P75872</accession>
<accession>Q8XD91</accession>
<accession>Q9R7Q3</accession>
<protein>
    <recommendedName>
        <fullName evidence="1">Methylglyoxal synthase</fullName>
        <shortName evidence="1">MGS</shortName>
        <ecNumber evidence="1 4 5 6">4.2.3.3</ecNumber>
    </recommendedName>
</protein>
<organism>
    <name type="scientific">Escherichia coli (strain K12)</name>
    <dbReference type="NCBI Taxonomy" id="83333"/>
    <lineage>
        <taxon>Bacteria</taxon>
        <taxon>Pseudomonadati</taxon>
        <taxon>Pseudomonadota</taxon>
        <taxon>Gammaproteobacteria</taxon>
        <taxon>Enterobacterales</taxon>
        <taxon>Enterobacteriaceae</taxon>
        <taxon>Escherichia</taxon>
    </lineage>
</organism>
<reference key="1">
    <citation type="journal article" date="1989" name="J. Biol. Chem.">
        <title>The molecular cloning of the gene encoding the Escherichia coli 75-kDa helicase and the determination of its nucleotide sequence and gentic map position.</title>
        <authorList>
            <person name="Wood E.R."/>
            <person name="Matson S.W."/>
        </authorList>
    </citation>
    <scope>NUCLEOTIDE SEQUENCE [GENOMIC DNA]</scope>
</reference>
<reference key="2">
    <citation type="journal article" date="1998" name="Mol. Microbiol.">
        <title>From famine to feast: the role of methylglyoxal production in Escherichia coli.</title>
        <authorList>
            <person name="Totemeyer S."/>
            <person name="Booth N.A."/>
            <person name="Nichols W.W."/>
            <person name="Dunbar B."/>
            <person name="Booth I.R."/>
        </authorList>
    </citation>
    <scope>NUCLEOTIDE SEQUENCE [GENOMIC DNA]</scope>
    <scope>PARTIAL PROTEIN SEQUENCE</scope>
    <scope>FUNCTION</scope>
</reference>
<reference key="3">
    <citation type="journal article" date="1996" name="DNA Res.">
        <title>A 718-kb DNA sequence of the Escherichia coli K-12 genome corresponding to the 12.7-28.0 min region on the linkage map.</title>
        <authorList>
            <person name="Oshima T."/>
            <person name="Aiba H."/>
            <person name="Baba T."/>
            <person name="Fujita K."/>
            <person name="Hayashi K."/>
            <person name="Honjo A."/>
            <person name="Ikemoto K."/>
            <person name="Inada T."/>
            <person name="Itoh T."/>
            <person name="Kajihara M."/>
            <person name="Kanai K."/>
            <person name="Kashimoto K."/>
            <person name="Kimura S."/>
            <person name="Kitagawa M."/>
            <person name="Makino K."/>
            <person name="Masuda S."/>
            <person name="Miki T."/>
            <person name="Mizobuchi K."/>
            <person name="Mori H."/>
            <person name="Motomura K."/>
            <person name="Nakamura Y."/>
            <person name="Nashimoto H."/>
            <person name="Nishio Y."/>
            <person name="Saito N."/>
            <person name="Sampei G."/>
            <person name="Seki Y."/>
            <person name="Tagami H."/>
            <person name="Takemoto K."/>
            <person name="Wada C."/>
            <person name="Yamamoto Y."/>
            <person name="Yano M."/>
            <person name="Horiuchi T."/>
        </authorList>
    </citation>
    <scope>NUCLEOTIDE SEQUENCE [LARGE SCALE GENOMIC DNA]</scope>
    <source>
        <strain>K12 / W3110 / ATCC 27325 / DSM 5911</strain>
    </source>
</reference>
<reference key="4">
    <citation type="journal article" date="1997" name="Science">
        <title>The complete genome sequence of Escherichia coli K-12.</title>
        <authorList>
            <person name="Blattner F.R."/>
            <person name="Plunkett G. III"/>
            <person name="Bloch C.A."/>
            <person name="Perna N.T."/>
            <person name="Burland V."/>
            <person name="Riley M."/>
            <person name="Collado-Vides J."/>
            <person name="Glasner J.D."/>
            <person name="Rode C.K."/>
            <person name="Mayhew G.F."/>
            <person name="Gregor J."/>
            <person name="Davis N.W."/>
            <person name="Kirkpatrick H.A."/>
            <person name="Goeden M.A."/>
            <person name="Rose D.J."/>
            <person name="Mau B."/>
            <person name="Shao Y."/>
        </authorList>
    </citation>
    <scope>NUCLEOTIDE SEQUENCE [LARGE SCALE GENOMIC DNA]</scope>
    <source>
        <strain>K12 / MG1655 / ATCC 47076</strain>
    </source>
</reference>
<reference key="5">
    <citation type="journal article" date="2006" name="Mol. Syst. Biol.">
        <title>Highly accurate genome sequences of Escherichia coli K-12 strains MG1655 and W3110.</title>
        <authorList>
            <person name="Hayashi K."/>
            <person name="Morooka N."/>
            <person name="Yamamoto Y."/>
            <person name="Fujita K."/>
            <person name="Isono K."/>
            <person name="Choi S."/>
            <person name="Ohtsubo E."/>
            <person name="Baba T."/>
            <person name="Wanner B.L."/>
            <person name="Mori H."/>
            <person name="Horiuchi T."/>
        </authorList>
    </citation>
    <scope>NUCLEOTIDE SEQUENCE [LARGE SCALE GENOMIC DNA]</scope>
    <source>
        <strain>K12 / W3110 / ATCC 27325 / DSM 5911</strain>
    </source>
</reference>
<reference key="6">
    <citation type="journal article" date="1994" name="Nucleic Acids Res.">
        <title>Intrinsic and extrinsic approaches for detecting genes in a bacterial genome.</title>
        <authorList>
            <person name="Borodovsky M."/>
            <person name="Rudd K.E."/>
            <person name="Koonin E.V."/>
        </authorList>
    </citation>
    <scope>IDENTIFICATION</scope>
</reference>
<reference key="7">
    <citation type="journal article" date="1998" name="Biochemistry">
        <title>Identification of catalytic bases in the active site of Escherichia coli methylglyoxal synthase: cloning, expression, and functional characterization of conserved aspartic acid residues.</title>
        <authorList>
            <person name="Saadat D."/>
            <person name="Harrison D.H.T."/>
        </authorList>
    </citation>
    <scope>FUNCTION</scope>
    <scope>ACTIVITY REGULATION</scope>
    <scope>PARTIAL PROTEIN SEQUENCE</scope>
    <scope>MUTAGENESIS OF ASP-20; ASP-71; ASP-91 AND ASP-101</scope>
    <scope>BIOPHYSICOCHEMICAL PROPERTIES</scope>
    <scope>ACTIVE SITE</scope>
</reference>
<reference key="8">
    <citation type="journal article" date="1999" name="Structure">
        <title>The crystal structure of methylglyoxal synthase from Escherichia coli.</title>
        <authorList>
            <person name="Saadat D."/>
            <person name="Harrison D.H.T."/>
        </authorList>
    </citation>
    <scope>X-RAY CRYSTALLOGRAPHY (1.9 ANGSTROMS)</scope>
    <scope>SUBUNIT</scope>
</reference>
<reference key="9">
    <citation type="journal article" date="2000" name="Biochemistry">
        <title>Mirroring perfection: the structure of methylglyoxal synthase complexed with the competitive inhibitor 2-phosphoglycolate.</title>
        <authorList>
            <person name="Saadat D."/>
            <person name="Harrison D.H.T."/>
        </authorList>
    </citation>
    <scope>X-RAY CRYSTALLOGRAPHY (2.00 ANGSTROMS) IN COMPLEX WITH SUBSTRATE ANALOG 2-PHOSPHOGLYCOLATE</scope>
    <scope>ACTIVE SITE</scope>
    <scope>SUBUNIT</scope>
</reference>
<reference evidence="9" key="10">
    <citation type="journal article" date="2001" name="Biochemistry">
        <title>Mechanistic implications of methylglyoxal synthase complexed with phosphoglycolohydroxamic acid as observed by X-ray crystallography and NMR spectroscopy.</title>
        <authorList>
            <person name="Marks G.T."/>
            <person name="Harris T.K."/>
            <person name="Massiah M.A."/>
            <person name="Mildvan A.S."/>
            <person name="Harrison D.H."/>
        </authorList>
    </citation>
    <scope>X-RAY CRYSTALLOGRAPHY (2.00 ANGSTROMS) IN COMPLEX WITH SUBSTRATE ANALOG PHOSPHOGLYCOLOHYDROXAMATE</scope>
    <scope>FUNCTION</scope>
    <scope>CATALYTIC ACTIVITY</scope>
    <scope>ACTIVITY REGULATION</scope>
    <scope>ACTIVE SITE</scope>
    <scope>SUBUNIT</scope>
</reference>
<reference evidence="10 11" key="11">
    <citation type="journal article" date="2004" name="Biochemistry">
        <title>Mutagenic studies on histidine 98 of methylglyoxal synthase: effects on mechanism and conformational change.</title>
        <authorList>
            <person name="Marks G.T."/>
            <person name="Susler M."/>
            <person name="Harrison D.H."/>
        </authorList>
    </citation>
    <scope>X-RAY CRYSTALLOGRAPHY (2.20 ANGSTROMS) OF MUTANTS ASN/GLN-98 IN COMPLEX WITH SUBSTRATE ANALOG 2-PHOSPHOGLYCOLATE</scope>
    <scope>FUNCTION</scope>
    <scope>CATALYTIC ACTIVITY</scope>
    <scope>BIOPHYSICOCHEMICAL PROPERTIES</scope>
    <scope>ACTIVITY REGULATION</scope>
    <scope>ACTIVE SITE</scope>
    <scope>SUBUNIT</scope>
    <scope>MUTAGENESIS OF HIS-98</scope>
</reference>
<evidence type="ECO:0000255" key="1">
    <source>
        <dbReference type="HAMAP-Rule" id="MF_00549"/>
    </source>
</evidence>
<evidence type="ECO:0000269" key="2">
    <source>
    </source>
</evidence>
<evidence type="ECO:0000269" key="3">
    <source>
    </source>
</evidence>
<evidence type="ECO:0000269" key="4">
    <source>
    </source>
</evidence>
<evidence type="ECO:0000269" key="5">
    <source>
    </source>
</evidence>
<evidence type="ECO:0000269" key="6">
    <source>
    </source>
</evidence>
<evidence type="ECO:0000305" key="7"/>
<evidence type="ECO:0007744" key="8">
    <source>
        <dbReference type="PDB" id="1EGH"/>
    </source>
</evidence>
<evidence type="ECO:0007744" key="9">
    <source>
        <dbReference type="PDB" id="1IK4"/>
    </source>
</evidence>
<evidence type="ECO:0007744" key="10">
    <source>
        <dbReference type="PDB" id="1S89"/>
    </source>
</evidence>
<evidence type="ECO:0007744" key="11">
    <source>
        <dbReference type="PDB" id="1S8A"/>
    </source>
</evidence>
<evidence type="ECO:0007829" key="12">
    <source>
        <dbReference type="PDB" id="1B93"/>
    </source>
</evidence>
<name>MGSA_ECOLI</name>
<gene>
    <name evidence="1" type="primary">mgsA</name>
    <name type="synonym">yccG</name>
    <name type="ordered locus">b0963</name>
    <name type="ordered locus">JW5129</name>
</gene>
<dbReference type="EC" id="4.2.3.3" evidence="1 4 5 6"/>
<dbReference type="EMBL" id="J04726">
    <property type="status" value="NOT_ANNOTATED_CDS"/>
    <property type="molecule type" value="Genomic_DNA"/>
</dbReference>
<dbReference type="EMBL" id="Y11249">
    <property type="protein sequence ID" value="CAA72119.1"/>
    <property type="molecule type" value="Genomic_DNA"/>
</dbReference>
<dbReference type="EMBL" id="U00096">
    <property type="protein sequence ID" value="AAC74049.2"/>
    <property type="molecule type" value="Genomic_DNA"/>
</dbReference>
<dbReference type="EMBL" id="AP009048">
    <property type="protein sequence ID" value="BAA35728.2"/>
    <property type="molecule type" value="Genomic_DNA"/>
</dbReference>
<dbReference type="PIR" id="B64837">
    <property type="entry name" value="B64837"/>
</dbReference>
<dbReference type="RefSeq" id="NP_415483.2">
    <property type="nucleotide sequence ID" value="NC_000913.3"/>
</dbReference>
<dbReference type="RefSeq" id="WP_000424181.1">
    <property type="nucleotide sequence ID" value="NZ_STEB01000006.1"/>
</dbReference>
<dbReference type="PDB" id="1B93">
    <property type="method" value="X-ray"/>
    <property type="resolution" value="1.90 A"/>
    <property type="chains" value="A/B/C=1-152"/>
</dbReference>
<dbReference type="PDB" id="1EGH">
    <property type="method" value="X-ray"/>
    <property type="resolution" value="2.00 A"/>
    <property type="chains" value="A/B/C/D/E/F=1-152"/>
</dbReference>
<dbReference type="PDB" id="1IK4">
    <property type="method" value="X-ray"/>
    <property type="resolution" value="2.00 A"/>
    <property type="chains" value="A/B/C/D/E/F=1-152"/>
</dbReference>
<dbReference type="PDB" id="1S89">
    <property type="method" value="X-ray"/>
    <property type="resolution" value="2.22 A"/>
    <property type="chains" value="A/B/C/D/E/F=1-152"/>
</dbReference>
<dbReference type="PDB" id="1S8A">
    <property type="method" value="X-ray"/>
    <property type="resolution" value="2.20 A"/>
    <property type="chains" value="A/B/C/D/E/F=1-152"/>
</dbReference>
<dbReference type="PDBsum" id="1B93"/>
<dbReference type="PDBsum" id="1EGH"/>
<dbReference type="PDBsum" id="1IK4"/>
<dbReference type="PDBsum" id="1S89"/>
<dbReference type="PDBsum" id="1S8A"/>
<dbReference type="SMR" id="P0A731"/>
<dbReference type="BioGRID" id="4260938">
    <property type="interactions" value="23"/>
</dbReference>
<dbReference type="BioGRID" id="849948">
    <property type="interactions" value="1"/>
</dbReference>
<dbReference type="DIP" id="DIP-48252N"/>
<dbReference type="FunCoup" id="P0A731">
    <property type="interactions" value="112"/>
</dbReference>
<dbReference type="STRING" id="511145.b0963"/>
<dbReference type="jPOST" id="P0A731"/>
<dbReference type="PaxDb" id="511145-b0963"/>
<dbReference type="EnsemblBacteria" id="AAC74049">
    <property type="protein sequence ID" value="AAC74049"/>
    <property type="gene ID" value="b0963"/>
</dbReference>
<dbReference type="GeneID" id="93776451"/>
<dbReference type="GeneID" id="945574"/>
<dbReference type="KEGG" id="ecj:JW5129"/>
<dbReference type="KEGG" id="eco:b0963"/>
<dbReference type="KEGG" id="ecoc:C3026_05885"/>
<dbReference type="PATRIC" id="fig|1411691.4.peg.1311"/>
<dbReference type="EchoBASE" id="EB2213"/>
<dbReference type="eggNOG" id="COG1803">
    <property type="taxonomic scope" value="Bacteria"/>
</dbReference>
<dbReference type="HOGENOM" id="CLU_120420_0_1_6"/>
<dbReference type="InParanoid" id="P0A731"/>
<dbReference type="OMA" id="RICDVHN"/>
<dbReference type="OrthoDB" id="9787147at2"/>
<dbReference type="PhylomeDB" id="P0A731"/>
<dbReference type="BioCyc" id="EcoCyc:METHGLYSYN-MONOMER"/>
<dbReference type="BioCyc" id="MetaCyc:METHGLYSYN-MONOMER"/>
<dbReference type="BRENDA" id="4.2.3.3">
    <property type="organism ID" value="2026"/>
</dbReference>
<dbReference type="SABIO-RK" id="P0A731"/>
<dbReference type="EvolutionaryTrace" id="P0A731"/>
<dbReference type="PRO" id="PR:P0A731"/>
<dbReference type="Proteomes" id="UP000000625">
    <property type="component" value="Chromosome"/>
</dbReference>
<dbReference type="GO" id="GO:0005829">
    <property type="term" value="C:cytosol"/>
    <property type="evidence" value="ECO:0000314"/>
    <property type="project" value="EcoCyc"/>
</dbReference>
<dbReference type="GO" id="GO:0042802">
    <property type="term" value="F:identical protein binding"/>
    <property type="evidence" value="ECO:0000314"/>
    <property type="project" value="EcoCyc"/>
</dbReference>
<dbReference type="GO" id="GO:0008929">
    <property type="term" value="F:methylglyoxal synthase activity"/>
    <property type="evidence" value="ECO:0000314"/>
    <property type="project" value="EcoCyc"/>
</dbReference>
<dbReference type="GO" id="GO:0019242">
    <property type="term" value="P:methylglyoxal biosynthetic process"/>
    <property type="evidence" value="ECO:0000315"/>
    <property type="project" value="EcoCyc"/>
</dbReference>
<dbReference type="GO" id="GO:0034214">
    <property type="term" value="P:protein hexamerization"/>
    <property type="evidence" value="ECO:0000314"/>
    <property type="project" value="EcoCyc"/>
</dbReference>
<dbReference type="CDD" id="cd01422">
    <property type="entry name" value="MGS"/>
    <property type="match status" value="1"/>
</dbReference>
<dbReference type="FunFam" id="3.40.50.1380:FF:000002">
    <property type="entry name" value="Methylglyoxal synthase"/>
    <property type="match status" value="1"/>
</dbReference>
<dbReference type="Gene3D" id="3.40.50.1380">
    <property type="entry name" value="Methylglyoxal synthase-like domain"/>
    <property type="match status" value="1"/>
</dbReference>
<dbReference type="HAMAP" id="MF_00549">
    <property type="entry name" value="Methylglyoxal_synth"/>
    <property type="match status" value="1"/>
</dbReference>
<dbReference type="InterPro" id="IPR004363">
    <property type="entry name" value="Methylgl_synth"/>
</dbReference>
<dbReference type="InterPro" id="IPR018148">
    <property type="entry name" value="Methylglyoxal_synth_AS"/>
</dbReference>
<dbReference type="InterPro" id="IPR011607">
    <property type="entry name" value="MGS-like_dom"/>
</dbReference>
<dbReference type="InterPro" id="IPR036914">
    <property type="entry name" value="MGS-like_dom_sf"/>
</dbReference>
<dbReference type="NCBIfam" id="TIGR00160">
    <property type="entry name" value="MGSA"/>
    <property type="match status" value="1"/>
</dbReference>
<dbReference type="NCBIfam" id="NF003559">
    <property type="entry name" value="PRK05234.1"/>
    <property type="match status" value="1"/>
</dbReference>
<dbReference type="PANTHER" id="PTHR30492">
    <property type="entry name" value="METHYLGLYOXAL SYNTHASE"/>
    <property type="match status" value="1"/>
</dbReference>
<dbReference type="PANTHER" id="PTHR30492:SF0">
    <property type="entry name" value="METHYLGLYOXAL SYNTHASE"/>
    <property type="match status" value="1"/>
</dbReference>
<dbReference type="Pfam" id="PF02142">
    <property type="entry name" value="MGS"/>
    <property type="match status" value="1"/>
</dbReference>
<dbReference type="PIRSF" id="PIRSF006614">
    <property type="entry name" value="Methylglyox_syn"/>
    <property type="match status" value="1"/>
</dbReference>
<dbReference type="SMART" id="SM00851">
    <property type="entry name" value="MGS"/>
    <property type="match status" value="1"/>
</dbReference>
<dbReference type="SUPFAM" id="SSF52335">
    <property type="entry name" value="Methylglyoxal synthase-like"/>
    <property type="match status" value="1"/>
</dbReference>
<dbReference type="PROSITE" id="PS01335">
    <property type="entry name" value="METHYLGLYOXAL_SYNTH"/>
    <property type="match status" value="1"/>
</dbReference>
<dbReference type="PROSITE" id="PS51855">
    <property type="entry name" value="MGS"/>
    <property type="match status" value="1"/>
</dbReference>
<feature type="chain" id="PRO_0000178625" description="Methylglyoxal synthase">
    <location>
        <begin position="1"/>
        <end position="152"/>
    </location>
</feature>
<feature type="domain" description="MGS-like" evidence="1">
    <location>
        <begin position="6"/>
        <end position="152"/>
    </location>
</feature>
<feature type="active site" description="Proton donor/acceptor" evidence="1 3 4 5 6">
    <location>
        <position position="71"/>
    </location>
</feature>
<feature type="binding site" evidence="1 4 9">
    <location>
        <position position="19"/>
    </location>
    <ligand>
        <name>substrate</name>
    </ligand>
</feature>
<feature type="binding site" evidence="1 3 4 5 8 9 10 11">
    <location>
        <position position="23"/>
    </location>
    <ligand>
        <name>substrate</name>
    </ligand>
</feature>
<feature type="binding site" evidence="1 3 4 5 8 9 10 11">
    <location>
        <begin position="45"/>
        <end position="48"/>
    </location>
    <ligand>
        <name>substrate</name>
    </ligand>
</feature>
<feature type="binding site" evidence="1 3 4 5 8 9 10 11">
    <location>
        <begin position="65"/>
        <end position="66"/>
    </location>
    <ligand>
        <name>substrate</name>
    </ligand>
</feature>
<feature type="binding site" evidence="1 3 4 8 9">
    <location>
        <position position="98"/>
    </location>
    <ligand>
        <name>substrate</name>
    </ligand>
</feature>
<feature type="mutagenesis site" description="Strongly decreased catalytic efficiency." evidence="6">
    <original>D</original>
    <variation>E</variation>
    <location>
        <position position="20"/>
    </location>
</feature>
<feature type="mutagenesis site" description="Causes inhibition by substrate leading to loss of enzyme activity." evidence="6">
    <original>D</original>
    <variation>N</variation>
    <location>
        <position position="20"/>
    </location>
</feature>
<feature type="mutagenesis site" description="Strongly decreased catalytic efficiency." evidence="6">
    <original>D</original>
    <variation>E</variation>
    <variation>N</variation>
    <location>
        <position position="71"/>
    </location>
</feature>
<feature type="mutagenesis site" description="Strongly decreased catalytic efficiency." evidence="6">
    <original>D</original>
    <variation>E</variation>
    <location>
        <position position="91"/>
    </location>
</feature>
<feature type="mutagenesis site" description="Causes inhibition by substrate leading to loss of enzyme activity." evidence="6">
    <original>D</original>
    <variation>N</variation>
    <location>
        <position position="91"/>
    </location>
</feature>
<feature type="mutagenesis site" description="Strongly decreased catalytic efficiency." evidence="5">
    <original>H</original>
    <variation>N</variation>
    <variation>Q</variation>
    <location>
        <position position="98"/>
    </location>
</feature>
<feature type="mutagenesis site" description="Strongly decreased catalytic efficiency." evidence="6">
    <original>D</original>
    <variation>E</variation>
    <variation>N</variation>
    <location>
        <position position="101"/>
    </location>
</feature>
<feature type="sequence conflict" description="In Ref. 1; J04726." evidence="7" ref="1">
    <original>ME</original>
    <variation>WK</variation>
    <location>
        <begin position="1"/>
        <end position="2"/>
    </location>
</feature>
<feature type="strand" evidence="12">
    <location>
        <begin position="3"/>
        <end position="8"/>
    </location>
</feature>
<feature type="strand" evidence="12">
    <location>
        <begin position="13"/>
        <end position="18"/>
    </location>
</feature>
<feature type="helix" evidence="12">
    <location>
        <begin position="20"/>
        <end position="22"/>
    </location>
</feature>
<feature type="helix" evidence="12">
    <location>
        <begin position="23"/>
        <end position="32"/>
    </location>
</feature>
<feature type="helix" evidence="12">
    <location>
        <begin position="34"/>
        <end position="37"/>
    </location>
</feature>
<feature type="strand" evidence="12">
    <location>
        <begin position="40"/>
        <end position="45"/>
    </location>
</feature>
<feature type="helix" evidence="12">
    <location>
        <begin position="48"/>
        <end position="56"/>
    </location>
</feature>
<feature type="strand" evidence="12">
    <location>
        <begin position="61"/>
        <end position="63"/>
    </location>
</feature>
<feature type="helix" evidence="12">
    <location>
        <begin position="66"/>
        <end position="68"/>
    </location>
</feature>
<feature type="helix" evidence="12">
    <location>
        <begin position="70"/>
        <end position="79"/>
    </location>
</feature>
<feature type="strand" evidence="12">
    <location>
        <begin position="85"/>
        <end position="89"/>
    </location>
</feature>
<feature type="helix" evidence="12">
    <location>
        <begin position="99"/>
        <end position="111"/>
    </location>
</feature>
<feature type="strand" evidence="12">
    <location>
        <begin position="116"/>
        <end position="119"/>
    </location>
</feature>
<feature type="helix" evidence="12">
    <location>
        <begin position="120"/>
        <end position="127"/>
    </location>
</feature>
<feature type="helix" evidence="12">
    <location>
        <begin position="130"/>
        <end position="133"/>
    </location>
</feature>
<feature type="strand" evidence="12">
    <location>
        <begin position="136"/>
        <end position="141"/>
    </location>
</feature>
<feature type="helix" evidence="12">
    <location>
        <begin position="143"/>
        <end position="147"/>
    </location>
</feature>
<keyword id="KW-0002">3D-structure</keyword>
<keyword id="KW-0963">Cytoplasm</keyword>
<keyword id="KW-0903">Direct protein sequencing</keyword>
<keyword id="KW-0456">Lyase</keyword>
<keyword id="KW-1185">Reference proteome</keyword>
<proteinExistence type="evidence at protein level"/>